<reference key="1">
    <citation type="book" date="2006" name="Gram positive pathogens, 2nd edition">
        <title>The Staphylococcus aureus NCTC 8325 genome.</title>
        <editorList>
            <person name="Fischetti V."/>
            <person name="Novick R."/>
            <person name="Ferretti J."/>
            <person name="Portnoy D."/>
            <person name="Rood J."/>
        </editorList>
        <authorList>
            <person name="Gillaspy A.F."/>
            <person name="Worrell V."/>
            <person name="Orvis J."/>
            <person name="Roe B.A."/>
            <person name="Dyer D.W."/>
            <person name="Iandolo J.J."/>
        </authorList>
    </citation>
    <scope>NUCLEOTIDE SEQUENCE [LARGE SCALE GENOMIC DNA]</scope>
    <source>
        <strain>NCTC 8325 / PS 47</strain>
    </source>
</reference>
<proteinExistence type="inferred from homology"/>
<dbReference type="EC" id="1.13.12.-" evidence="2"/>
<dbReference type="EMBL" id="CP000253">
    <property type="protein sequence ID" value="ABD29981.1"/>
    <property type="molecule type" value="Genomic_DNA"/>
</dbReference>
<dbReference type="RefSeq" id="WP_000267247.1">
    <property type="nucleotide sequence ID" value="NZ_LS483365.1"/>
</dbReference>
<dbReference type="RefSeq" id="YP_499409.1">
    <property type="nucleotide sequence ID" value="NC_007795.1"/>
</dbReference>
<dbReference type="SMR" id="Q2FZX9"/>
<dbReference type="STRING" id="93061.SAOUHSC_00855"/>
<dbReference type="PaxDb" id="1280-SAXN108_0916"/>
<dbReference type="GeneID" id="3918986"/>
<dbReference type="KEGG" id="sao:SAOUHSC_00855"/>
<dbReference type="PATRIC" id="fig|93061.5.peg.778"/>
<dbReference type="eggNOG" id="COG2070">
    <property type="taxonomic scope" value="Bacteria"/>
</dbReference>
<dbReference type="HOGENOM" id="CLU_038732_5_1_9"/>
<dbReference type="OrthoDB" id="9778912at2"/>
<dbReference type="PRO" id="PR:Q2FZX9"/>
<dbReference type="Proteomes" id="UP000008816">
    <property type="component" value="Chromosome"/>
</dbReference>
<dbReference type="GO" id="GO:0018580">
    <property type="term" value="F:nitronate monooxygenase activity"/>
    <property type="evidence" value="ECO:0000318"/>
    <property type="project" value="GO_Central"/>
</dbReference>
<dbReference type="GO" id="GO:0000166">
    <property type="term" value="F:nucleotide binding"/>
    <property type="evidence" value="ECO:0007669"/>
    <property type="project" value="UniProtKB-KW"/>
</dbReference>
<dbReference type="GO" id="GO:0009636">
    <property type="term" value="P:response to toxic substance"/>
    <property type="evidence" value="ECO:0007669"/>
    <property type="project" value="UniProtKB-KW"/>
</dbReference>
<dbReference type="CDD" id="cd04730">
    <property type="entry name" value="NPD_like"/>
    <property type="match status" value="1"/>
</dbReference>
<dbReference type="FunFam" id="3.20.20.70:FF:000154">
    <property type="entry name" value="Probable nitronate monooxygenase"/>
    <property type="match status" value="1"/>
</dbReference>
<dbReference type="Gene3D" id="3.20.20.70">
    <property type="entry name" value="Aldolase class I"/>
    <property type="match status" value="1"/>
</dbReference>
<dbReference type="InterPro" id="IPR013785">
    <property type="entry name" value="Aldolase_TIM"/>
</dbReference>
<dbReference type="InterPro" id="IPR004136">
    <property type="entry name" value="NMO"/>
</dbReference>
<dbReference type="PANTHER" id="PTHR42747">
    <property type="entry name" value="NITRONATE MONOOXYGENASE-RELATED"/>
    <property type="match status" value="1"/>
</dbReference>
<dbReference type="PANTHER" id="PTHR42747:SF3">
    <property type="entry name" value="NITRONATE MONOOXYGENASE-RELATED"/>
    <property type="match status" value="1"/>
</dbReference>
<dbReference type="Pfam" id="PF03060">
    <property type="entry name" value="NMO"/>
    <property type="match status" value="1"/>
</dbReference>
<dbReference type="SUPFAM" id="SSF51412">
    <property type="entry name" value="Inosine monophosphate dehydrogenase (IMPDH)"/>
    <property type="match status" value="1"/>
</dbReference>
<evidence type="ECO:0000250" key="1">
    <source>
        <dbReference type="UniProtKB" id="D0V3Y4"/>
    </source>
</evidence>
<evidence type="ECO:0000250" key="2">
    <source>
        <dbReference type="UniProtKB" id="Q9HWH9"/>
    </source>
</evidence>
<evidence type="ECO:0000305" key="3"/>
<keyword id="KW-0216">Detoxification</keyword>
<keyword id="KW-0285">Flavoprotein</keyword>
<keyword id="KW-0288">FMN</keyword>
<keyword id="KW-0503">Monooxygenase</keyword>
<keyword id="KW-0547">Nucleotide-binding</keyword>
<keyword id="KW-0560">Oxidoreductase</keyword>
<keyword id="KW-1185">Reference proteome</keyword>
<protein>
    <recommendedName>
        <fullName>Probable nitronate monooxygenase</fullName>
        <shortName>NMO</shortName>
        <ecNumber evidence="2">1.13.12.-</ecNumber>
    </recommendedName>
    <alternativeName>
        <fullName>Propionate 3-nitronate monooxygenase</fullName>
        <shortName>P3N monooxygenase</shortName>
    </alternativeName>
</protein>
<sequence length="355" mass="38548">MWNKNRLTQMLSIEYPIIQAGMAGSTTPKLVASVSNSGGLGTIGAGYFNTQQLEDEIDYVRQLTSNSFGVNVFVPSQQSYTSSQIENMNAWLKPYRRALHLEEPVVKITEEQQFKCHIDTIIKKQVPVCCFTFGIPSEQIISRLKAANVKLIGTATSVDEAIANEKAGMDAIVAQGSEAGGHRGSFLKPKNQLPMVGTISLVPQIVDVVSIPVIAAGGIMDGRGVLASIVLGAEGVQMGTAFLTSQDSNASELLRDAIINSKETDTVITKAFSGKLARGINNRFIEEMSQYEGDIPDYPIQNELTSSIRKAAANIGDKELIHMWSGQSPRLATTHPANTIMSNIINQINQIMQYK</sequence>
<accession>Q2FZX9</accession>
<name>NMO_STAA8</name>
<feature type="chain" id="PRO_0000360898" description="Probable nitronate monooxygenase">
    <location>
        <begin position="1"/>
        <end position="355"/>
    </location>
</feature>
<feature type="binding site" evidence="2">
    <location>
        <position position="71"/>
    </location>
    <ligand>
        <name>FMN</name>
        <dbReference type="ChEBI" id="CHEBI:58210"/>
    </ligand>
</feature>
<feature type="binding site" evidence="2">
    <location>
        <position position="175"/>
    </location>
    <ligand>
        <name>FMN</name>
        <dbReference type="ChEBI" id="CHEBI:58210"/>
    </ligand>
</feature>
<feature type="binding site" evidence="2">
    <location>
        <position position="180"/>
    </location>
    <ligand>
        <name>FMN</name>
        <dbReference type="ChEBI" id="CHEBI:58210"/>
    </ligand>
</feature>
<feature type="binding site" evidence="2">
    <location>
        <position position="218"/>
    </location>
    <ligand>
        <name>FMN</name>
        <dbReference type="ChEBI" id="CHEBI:58210"/>
    </ligand>
</feature>
<feature type="binding site" evidence="2">
    <location>
        <begin position="237"/>
        <end position="240"/>
    </location>
    <ligand>
        <name>FMN</name>
        <dbReference type="ChEBI" id="CHEBI:58210"/>
    </ligand>
</feature>
<comment type="function">
    <text evidence="2">Nitronate monooxygenase that uses molecular oxygen to catalyze the oxidative denitrification of alkyl nitronates. Acts on propionate 3-nitronate (P3N), the presumed physiological substrate. Probably functions in the detoxification of P3N, a metabolic poison produced by plants and fungi as a defense mechanism.</text>
</comment>
<comment type="catalytic activity">
    <reaction evidence="1">
        <text>3 propionate 3-nitronate + 3 O2 + H2O = 3 3-oxopropanoate + 2 nitrate + nitrite + H2O2 + 3 H(+)</text>
        <dbReference type="Rhea" id="RHEA:57332"/>
        <dbReference type="ChEBI" id="CHEBI:15377"/>
        <dbReference type="ChEBI" id="CHEBI:15378"/>
        <dbReference type="ChEBI" id="CHEBI:15379"/>
        <dbReference type="ChEBI" id="CHEBI:16240"/>
        <dbReference type="ChEBI" id="CHEBI:16301"/>
        <dbReference type="ChEBI" id="CHEBI:17632"/>
        <dbReference type="ChEBI" id="CHEBI:33190"/>
        <dbReference type="ChEBI" id="CHEBI:136067"/>
    </reaction>
</comment>
<comment type="cofactor">
    <cofactor evidence="2">
        <name>FMN</name>
        <dbReference type="ChEBI" id="CHEBI:58210"/>
    </cofactor>
    <text evidence="2">Binds 1 FMN per subunit.</text>
</comment>
<comment type="miscellaneous">
    <text evidence="3">P3N is a potent irreversible inhibitor of the key enzyme succinate dehydrogenase in the Krebs cycle and electron transport chain. P3N has been shown to be a toxic metabolite to bacteria, plants, fungi, mammals or any organism that uses succinate dehydrogenase.</text>
</comment>
<comment type="similarity">
    <text evidence="3">Belongs to the nitronate monooxygenase family. NMO class I subfamily.</text>
</comment>
<organism>
    <name type="scientific">Staphylococcus aureus (strain NCTC 8325 / PS 47)</name>
    <dbReference type="NCBI Taxonomy" id="93061"/>
    <lineage>
        <taxon>Bacteria</taxon>
        <taxon>Bacillati</taxon>
        <taxon>Bacillota</taxon>
        <taxon>Bacilli</taxon>
        <taxon>Bacillales</taxon>
        <taxon>Staphylococcaceae</taxon>
        <taxon>Staphylococcus</taxon>
    </lineage>
</organism>
<gene>
    <name type="ordered locus">SAOUHSC_00855</name>
</gene>